<feature type="chain" id="PRO_1000149186" description="2-isopropylmalate synthase">
    <location>
        <begin position="1"/>
        <end position="523"/>
    </location>
</feature>
<feature type="domain" description="Pyruvate carboxyltransferase" evidence="1">
    <location>
        <begin position="5"/>
        <end position="267"/>
    </location>
</feature>
<feature type="region of interest" description="Regulatory domain" evidence="1">
    <location>
        <begin position="392"/>
        <end position="523"/>
    </location>
</feature>
<feature type="binding site" evidence="1">
    <location>
        <position position="14"/>
    </location>
    <ligand>
        <name>Mn(2+)</name>
        <dbReference type="ChEBI" id="CHEBI:29035"/>
    </ligand>
</feature>
<feature type="binding site" evidence="1">
    <location>
        <position position="202"/>
    </location>
    <ligand>
        <name>Mn(2+)</name>
        <dbReference type="ChEBI" id="CHEBI:29035"/>
    </ligand>
</feature>
<feature type="binding site" evidence="1">
    <location>
        <position position="204"/>
    </location>
    <ligand>
        <name>Mn(2+)</name>
        <dbReference type="ChEBI" id="CHEBI:29035"/>
    </ligand>
</feature>
<feature type="binding site" evidence="1">
    <location>
        <position position="238"/>
    </location>
    <ligand>
        <name>Mn(2+)</name>
        <dbReference type="ChEBI" id="CHEBI:29035"/>
    </ligand>
</feature>
<dbReference type="EC" id="2.3.3.13" evidence="1"/>
<dbReference type="EMBL" id="CP001164">
    <property type="protein sequence ID" value="ACI37329.1"/>
    <property type="molecule type" value="Genomic_DNA"/>
</dbReference>
<dbReference type="RefSeq" id="WP_000082847.1">
    <property type="nucleotide sequence ID" value="NC_011353.1"/>
</dbReference>
<dbReference type="SMR" id="B5YZB0"/>
<dbReference type="GeneID" id="75169974"/>
<dbReference type="KEGG" id="ecf:ECH74115_0081"/>
<dbReference type="HOGENOM" id="CLU_022158_0_1_6"/>
<dbReference type="UniPathway" id="UPA00048">
    <property type="reaction ID" value="UER00070"/>
</dbReference>
<dbReference type="GO" id="GO:0005829">
    <property type="term" value="C:cytosol"/>
    <property type="evidence" value="ECO:0007669"/>
    <property type="project" value="TreeGrafter"/>
</dbReference>
<dbReference type="GO" id="GO:0003852">
    <property type="term" value="F:2-isopropylmalate synthase activity"/>
    <property type="evidence" value="ECO:0007669"/>
    <property type="project" value="UniProtKB-UniRule"/>
</dbReference>
<dbReference type="GO" id="GO:0003985">
    <property type="term" value="F:acetyl-CoA C-acetyltransferase activity"/>
    <property type="evidence" value="ECO:0007669"/>
    <property type="project" value="UniProtKB-UniRule"/>
</dbReference>
<dbReference type="GO" id="GO:0030145">
    <property type="term" value="F:manganese ion binding"/>
    <property type="evidence" value="ECO:0007669"/>
    <property type="project" value="UniProtKB-UniRule"/>
</dbReference>
<dbReference type="GO" id="GO:0009098">
    <property type="term" value="P:L-leucine biosynthetic process"/>
    <property type="evidence" value="ECO:0007669"/>
    <property type="project" value="UniProtKB-UniRule"/>
</dbReference>
<dbReference type="CDD" id="cd07940">
    <property type="entry name" value="DRE_TIM_IPMS"/>
    <property type="match status" value="1"/>
</dbReference>
<dbReference type="FunFam" id="1.10.238.260:FF:000001">
    <property type="entry name" value="2-isopropylmalate synthase"/>
    <property type="match status" value="1"/>
</dbReference>
<dbReference type="FunFam" id="3.20.20.70:FF:000010">
    <property type="entry name" value="2-isopropylmalate synthase"/>
    <property type="match status" value="1"/>
</dbReference>
<dbReference type="FunFam" id="3.30.160.270:FF:000001">
    <property type="entry name" value="2-isopropylmalate synthase"/>
    <property type="match status" value="1"/>
</dbReference>
<dbReference type="Gene3D" id="1.10.238.260">
    <property type="match status" value="1"/>
</dbReference>
<dbReference type="Gene3D" id="3.30.160.270">
    <property type="match status" value="1"/>
</dbReference>
<dbReference type="Gene3D" id="3.20.20.70">
    <property type="entry name" value="Aldolase class I"/>
    <property type="match status" value="1"/>
</dbReference>
<dbReference type="HAMAP" id="MF_01025">
    <property type="entry name" value="LeuA_type1"/>
    <property type="match status" value="1"/>
</dbReference>
<dbReference type="InterPro" id="IPR050073">
    <property type="entry name" value="2-IPM_HCS-like"/>
</dbReference>
<dbReference type="InterPro" id="IPR013709">
    <property type="entry name" value="2-isopropylmalate_synth_dimer"/>
</dbReference>
<dbReference type="InterPro" id="IPR002034">
    <property type="entry name" value="AIPM/Hcit_synth_CS"/>
</dbReference>
<dbReference type="InterPro" id="IPR013785">
    <property type="entry name" value="Aldolase_TIM"/>
</dbReference>
<dbReference type="InterPro" id="IPR054691">
    <property type="entry name" value="LeuA/HCS_post-cat"/>
</dbReference>
<dbReference type="InterPro" id="IPR036230">
    <property type="entry name" value="LeuA_allosteric_dom_sf"/>
</dbReference>
<dbReference type="InterPro" id="IPR005671">
    <property type="entry name" value="LeuA_bact_synth"/>
</dbReference>
<dbReference type="InterPro" id="IPR000891">
    <property type="entry name" value="PYR_CT"/>
</dbReference>
<dbReference type="NCBIfam" id="TIGR00973">
    <property type="entry name" value="leuA_bact"/>
    <property type="match status" value="1"/>
</dbReference>
<dbReference type="NCBIfam" id="NF002084">
    <property type="entry name" value="PRK00915.1-1"/>
    <property type="match status" value="1"/>
</dbReference>
<dbReference type="NCBIfam" id="NF002086">
    <property type="entry name" value="PRK00915.1-3"/>
    <property type="match status" value="1"/>
</dbReference>
<dbReference type="PANTHER" id="PTHR10277:SF9">
    <property type="entry name" value="2-ISOPROPYLMALATE SYNTHASE 1, CHLOROPLASTIC-RELATED"/>
    <property type="match status" value="1"/>
</dbReference>
<dbReference type="PANTHER" id="PTHR10277">
    <property type="entry name" value="HOMOCITRATE SYNTHASE-RELATED"/>
    <property type="match status" value="1"/>
</dbReference>
<dbReference type="Pfam" id="PF22617">
    <property type="entry name" value="HCS_D2"/>
    <property type="match status" value="1"/>
</dbReference>
<dbReference type="Pfam" id="PF00682">
    <property type="entry name" value="HMGL-like"/>
    <property type="match status" value="1"/>
</dbReference>
<dbReference type="Pfam" id="PF08502">
    <property type="entry name" value="LeuA_dimer"/>
    <property type="match status" value="1"/>
</dbReference>
<dbReference type="SMART" id="SM00917">
    <property type="entry name" value="LeuA_dimer"/>
    <property type="match status" value="1"/>
</dbReference>
<dbReference type="SUPFAM" id="SSF110921">
    <property type="entry name" value="2-isopropylmalate synthase LeuA, allosteric (dimerisation) domain"/>
    <property type="match status" value="1"/>
</dbReference>
<dbReference type="SUPFAM" id="SSF51569">
    <property type="entry name" value="Aldolase"/>
    <property type="match status" value="1"/>
</dbReference>
<dbReference type="PROSITE" id="PS00815">
    <property type="entry name" value="AIPM_HOMOCIT_SYNTH_1"/>
    <property type="match status" value="1"/>
</dbReference>
<dbReference type="PROSITE" id="PS00816">
    <property type="entry name" value="AIPM_HOMOCIT_SYNTH_2"/>
    <property type="match status" value="1"/>
</dbReference>
<dbReference type="PROSITE" id="PS50991">
    <property type="entry name" value="PYR_CT"/>
    <property type="match status" value="1"/>
</dbReference>
<evidence type="ECO:0000255" key="1">
    <source>
        <dbReference type="HAMAP-Rule" id="MF_01025"/>
    </source>
</evidence>
<organism>
    <name type="scientific">Escherichia coli O157:H7 (strain EC4115 / EHEC)</name>
    <dbReference type="NCBI Taxonomy" id="444450"/>
    <lineage>
        <taxon>Bacteria</taxon>
        <taxon>Pseudomonadati</taxon>
        <taxon>Pseudomonadota</taxon>
        <taxon>Gammaproteobacteria</taxon>
        <taxon>Enterobacterales</taxon>
        <taxon>Enterobacteriaceae</taxon>
        <taxon>Escherichia</taxon>
    </lineage>
</organism>
<reference key="1">
    <citation type="journal article" date="2011" name="Proc. Natl. Acad. Sci. U.S.A.">
        <title>Genomic anatomy of Escherichia coli O157:H7 outbreaks.</title>
        <authorList>
            <person name="Eppinger M."/>
            <person name="Mammel M.K."/>
            <person name="Leclerc J.E."/>
            <person name="Ravel J."/>
            <person name="Cebula T.A."/>
        </authorList>
    </citation>
    <scope>NUCLEOTIDE SEQUENCE [LARGE SCALE GENOMIC DNA]</scope>
    <source>
        <strain>EC4115 / EHEC</strain>
    </source>
</reference>
<comment type="function">
    <text evidence="1">Catalyzes the condensation of the acetyl group of acetyl-CoA with 3-methyl-2-oxobutanoate (2-ketoisovalerate) to form 3-carboxy-3-hydroxy-4-methylpentanoate (2-isopropylmalate).</text>
</comment>
<comment type="catalytic activity">
    <reaction evidence="1">
        <text>3-methyl-2-oxobutanoate + acetyl-CoA + H2O = (2S)-2-isopropylmalate + CoA + H(+)</text>
        <dbReference type="Rhea" id="RHEA:21524"/>
        <dbReference type="ChEBI" id="CHEBI:1178"/>
        <dbReference type="ChEBI" id="CHEBI:11851"/>
        <dbReference type="ChEBI" id="CHEBI:15377"/>
        <dbReference type="ChEBI" id="CHEBI:15378"/>
        <dbReference type="ChEBI" id="CHEBI:57287"/>
        <dbReference type="ChEBI" id="CHEBI:57288"/>
        <dbReference type="EC" id="2.3.3.13"/>
    </reaction>
</comment>
<comment type="cofactor">
    <cofactor evidence="1">
        <name>Mn(2+)</name>
        <dbReference type="ChEBI" id="CHEBI:29035"/>
    </cofactor>
</comment>
<comment type="pathway">
    <text evidence="1">Amino-acid biosynthesis; L-leucine biosynthesis; L-leucine from 3-methyl-2-oxobutanoate: step 1/4.</text>
</comment>
<comment type="subunit">
    <text evidence="1">Homodimer.</text>
</comment>
<comment type="subcellular location">
    <subcellularLocation>
        <location evidence="1">Cytoplasm</location>
    </subcellularLocation>
</comment>
<comment type="similarity">
    <text evidence="1">Belongs to the alpha-IPM synthase/homocitrate synthase family. LeuA type 1 subfamily.</text>
</comment>
<gene>
    <name evidence="1" type="primary">leuA</name>
    <name type="ordered locus">ECH74115_0081</name>
</gene>
<name>LEU1_ECO5E</name>
<sequence>MSQQVIIFDTTLRDGEQALQASLSVKEKLQIALALERMGVDVMEVGFPVSSPGDFESVQTIARQVKNSRVCALARCVEKDIDVAAESLKVAEAFRIHTFIATSPMHIATKLRSTLDEVIERAIYMVKRARNYTDDVEFSCEDAGRTPIADLARVVEAAINAGATTINIPDTVGYTMPFEFAGIISGLYERVPNIDKAIISVHTHDDLGLAVGNSLAAVHAGARQVEGAMNGIGERAGNCSLEEVIMAIKVRKDILNVHTAINHQEIWRTSQLVSQICNMPIPANKAIVGSGAFAHSSGIHQDGVLKNRENYEIMTPESIGLNQIQLNLTSRSGRAAVKHRMDEMGYKESEYNLDNLYDAFLKLADKKGQVFDYDLEALAFIGKQQEEPEHFRLDYFSVQSGSNDIATAAVKLACGEEVKAEAANGNGPVDAVYQAINRITDYNVELVKYSLTAKGHGKDALGQVDIVANYNGRRFHGVGLATDIVESSAKAMVHVLNNIWRATEVEKELQRKAQHNENNKETV</sequence>
<keyword id="KW-0028">Amino-acid biosynthesis</keyword>
<keyword id="KW-0100">Branched-chain amino acid biosynthesis</keyword>
<keyword id="KW-0963">Cytoplasm</keyword>
<keyword id="KW-0432">Leucine biosynthesis</keyword>
<keyword id="KW-0464">Manganese</keyword>
<keyword id="KW-0479">Metal-binding</keyword>
<keyword id="KW-0808">Transferase</keyword>
<protein>
    <recommendedName>
        <fullName evidence="1">2-isopropylmalate synthase</fullName>
        <ecNumber evidence="1">2.3.3.13</ecNumber>
    </recommendedName>
    <alternativeName>
        <fullName evidence="1">Alpha-IPM synthase</fullName>
    </alternativeName>
    <alternativeName>
        <fullName evidence="1">Alpha-isopropylmalate synthase</fullName>
    </alternativeName>
</protein>
<proteinExistence type="inferred from homology"/>
<accession>B5YZB0</accession>